<evidence type="ECO:0000255" key="1"/>
<evidence type="ECO:0000269" key="2">
    <source>
    </source>
</evidence>
<evidence type="ECO:0000269" key="3">
    <source>
    </source>
</evidence>
<evidence type="ECO:0000303" key="4">
    <source>
    </source>
</evidence>
<evidence type="ECO:0000305" key="5"/>
<evidence type="ECO:0000305" key="6">
    <source>
    </source>
</evidence>
<evidence type="ECO:0000312" key="7">
    <source>
        <dbReference type="EMBL" id="AFQ00676.1"/>
    </source>
</evidence>
<dbReference type="EMBL" id="JN695597">
    <property type="protein sequence ID" value="AFQ00676.1"/>
    <property type="molecule type" value="mRNA"/>
</dbReference>
<dbReference type="TCDB" id="1.C.112.1.2">
    <property type="family name" value="the cubozoan protein toxin (cpt) family"/>
</dbReference>
<dbReference type="GO" id="GO:0005576">
    <property type="term" value="C:extracellular region"/>
    <property type="evidence" value="ECO:0007669"/>
    <property type="project" value="UniProtKB-SubCell"/>
</dbReference>
<dbReference type="GO" id="GO:0016020">
    <property type="term" value="C:membrane"/>
    <property type="evidence" value="ECO:0007669"/>
    <property type="project" value="UniProtKB-KW"/>
</dbReference>
<dbReference type="GO" id="GO:0042151">
    <property type="term" value="C:nematocyst"/>
    <property type="evidence" value="ECO:0007669"/>
    <property type="project" value="UniProtKB-SubCell"/>
</dbReference>
<dbReference type="GO" id="GO:0044218">
    <property type="term" value="C:other organism cell membrane"/>
    <property type="evidence" value="ECO:0007669"/>
    <property type="project" value="UniProtKB-KW"/>
</dbReference>
<dbReference type="GO" id="GO:0090729">
    <property type="term" value="F:toxin activity"/>
    <property type="evidence" value="ECO:0007669"/>
    <property type="project" value="UniProtKB-KW"/>
</dbReference>
<dbReference type="GO" id="GO:0031640">
    <property type="term" value="P:killing of cells of another organism"/>
    <property type="evidence" value="ECO:0007669"/>
    <property type="project" value="UniProtKB-KW"/>
</dbReference>
<accession>T1PRE3</accession>
<name>JTX2A_CHIFL</name>
<feature type="signal peptide" evidence="1">
    <location>
        <begin position="1"/>
        <end position="18"/>
    </location>
</feature>
<feature type="propeptide" id="PRO_0000453745" evidence="6">
    <location>
        <begin position="19"/>
        <end position="25"/>
    </location>
</feature>
<feature type="chain" id="PRO_5004583032" description="Toxin CfTX-A" evidence="6">
    <location>
        <begin position="26"/>
        <end position="454"/>
    </location>
</feature>
<feature type="coiled-coil region" evidence="1">
    <location>
        <begin position="27"/>
        <end position="61"/>
    </location>
</feature>
<feature type="sequence conflict" description="In Ref. 1; AA sequence." evidence="5" ref="1">
    <original>G</original>
    <variation>D</variation>
    <location>
        <position position="33"/>
    </location>
</feature>
<proteinExistence type="evidence at protein level"/>
<keyword id="KW-0165">Cleavage on pair of basic residues</keyword>
<keyword id="KW-0175">Coiled coil</keyword>
<keyword id="KW-0204">Cytolysis</keyword>
<keyword id="KW-0903">Direct protein sequencing</keyword>
<keyword id="KW-1015">Disulfide bond</keyword>
<keyword id="KW-0354">Hemolysis</keyword>
<keyword id="KW-0472">Membrane</keyword>
<keyword id="KW-0166">Nematocyst</keyword>
<keyword id="KW-0964">Secreted</keyword>
<keyword id="KW-0732">Signal</keyword>
<keyword id="KW-1052">Target cell membrane</keyword>
<keyword id="KW-1053">Target membrane</keyword>
<keyword id="KW-0800">Toxin</keyword>
<organism>
    <name type="scientific">Chironex fleckeri</name>
    <name type="common">Australian box jellyfish</name>
    <dbReference type="NCBI Taxonomy" id="45396"/>
    <lineage>
        <taxon>Eukaryota</taxon>
        <taxon>Metazoa</taxon>
        <taxon>Cnidaria</taxon>
        <taxon>Cubozoa</taxon>
        <taxon>Chirodropida</taxon>
        <taxon>Chirodropidae</taxon>
        <taxon>Chironex</taxon>
    </lineage>
</organism>
<sequence>MDYAFIVFLVCFVSGTLGNRRRAKRDVDEVTSGINQLVNQLNNVQQDTAAIKSALEELKTEVSASPSTVSQVSEVVNTVGSSLTKFTSGDAFNIVSGCLDLLSTVASTFGGPYGIAISAVISLVSSILSLFAGDGFDSATRKVIEEAFKTHRDQELRDSVNGARRTFNDVIAFLKGASKHGNVTEQELEVISKGVPLTKLSDTLGILESRINRGSTSTDAAEAERTVEFIFLYLQLATMRDTLITNFILILKQVPAADTYANAVSISLDANKESVRETIDFLHNMEAKNAVCGAYYYPIYHSEMTKSILSFAKFFGLPDPPRNTFGGVYRVQNRYWPTWYICKESYMGNHMFRGCSNVRSPSVQIRALENGYQKINLRGKNMYITKHAQGWAWGTADNDPGEQGYFVFVPLKSGYYMISTKKWPNYFVYMESSASGYIRSWNHNPGLQGHWRIL</sequence>
<protein>
    <recommendedName>
        <fullName evidence="4">Toxin CfTX-A</fullName>
    </recommendedName>
    <alternativeName>
        <fullName evidence="7">Toxin A</fullName>
        <shortName evidence="7">TX-A</shortName>
    </alternativeName>
</protein>
<comment type="function">
    <text evidence="2">The fraction containing this toxin and CfTX-A shows potent hemolytic activity (PubMed:24403082). This fraction causes minor effects on the cardiovascular system of anesthetized rats (at 25 ug/kg), since it has no significant effects on heart rate but produces relatively small increases in mean arterial pressure (PubMed:24403082).</text>
</comment>
<comment type="subunit">
    <text evidence="6">Oligomer.</text>
</comment>
<comment type="subcellular location">
    <subcellularLocation>
        <location evidence="2 3">Secreted</location>
    </subcellularLocation>
    <subcellularLocation>
        <location evidence="2 3">Nematocyst</location>
    </subcellularLocation>
    <subcellularLocation>
        <location evidence="6">Target cell membrane</location>
    </subcellularLocation>
    <text evidence="6">Forms a membrane channel in the prey.</text>
</comment>
<comment type="tissue specificity">
    <text evidence="5">Nematocytes.</text>
</comment>
<comment type="PTM">
    <text evidence="5">Contains 2 disulfide bonds.</text>
</comment>
<comment type="miscellaneous">
    <text evidence="2">Negative results: the fraction containing this toxin and CfTX-B does not cross-react with CfTX-1 and CfTX-2 antibodies.</text>
</comment>
<comment type="miscellaneous">
    <text evidence="3">Found after both pressure and chemical disruption of nematocysts.</text>
</comment>
<comment type="similarity">
    <text evidence="6">Belongs to the jellyfish toxin family. Type II subfamily.</text>
</comment>
<reference key="1">
    <citation type="journal article" date="2014" name="J. Biol. Chem.">
        <title>Chironex fleckeri (box jellyfish) venom proteins: expansion of a cnidarian toxin family that elicits variable cytolytic and cardiovascular effects.</title>
        <authorList>
            <person name="Brinkman D.L."/>
            <person name="Konstantakopoulos N."/>
            <person name="McInerney B.V."/>
            <person name="Mulvenna J."/>
            <person name="Seymour J.E."/>
            <person name="Isbister G.K."/>
            <person name="Hodgson W.C."/>
        </authorList>
    </citation>
    <scope>NUCLEOTIDE SEQUENCE [MRNA]</scope>
    <scope>PROTEIN SEQUENCE OF 26-45; 53-64 AND 314-322</scope>
    <scope>SUBCELLULAR LOCATION</scope>
    <scope>FUNCTION</scope>
    <scope>IDENTIFICATION BY MASS SPECTROMETRY</scope>
    <scope>SUBUNIT</scope>
    <scope>3D-STRUCTURE MODELING</scope>
    <source>
        <tissue>Tentacle</tissue>
    </source>
</reference>
<reference key="2">
    <citation type="journal article" date="2015" name="Toxins">
        <title>Firing the sting: chemically induced discharge of cnidae reveals novel proteins and peptides from box jellyfish (Chironex fleckeri) venom.</title>
        <authorList>
            <person name="Jouiaei M."/>
            <person name="Casewell N.R."/>
            <person name="Yanagihara A.A."/>
            <person name="Nouwens A."/>
            <person name="Cribb B.W."/>
            <person name="Whitehead D."/>
            <person name="Jackson T.N."/>
            <person name="Ali S.A."/>
            <person name="Wagstaff S.C."/>
            <person name="Koludarov I."/>
            <person name="Alewood P."/>
            <person name="Hansen J."/>
            <person name="Fry B.G."/>
        </authorList>
    </citation>
    <scope>IDENTIFICATION IN TRANSCRIPTOME AND PROTEOME</scope>
    <scope>SUBCELLULAR LOCATION</scope>
    <source>
        <tissue>Tentacle</tissue>
    </source>
</reference>